<name>MURB_BDEBA</name>
<gene>
    <name evidence="1" type="primary">murB</name>
    <name type="ordered locus">Bd3233</name>
</gene>
<protein>
    <recommendedName>
        <fullName evidence="1">UDP-N-acetylenolpyruvoylglucosamine reductase</fullName>
        <ecNumber evidence="1">1.3.1.98</ecNumber>
    </recommendedName>
    <alternativeName>
        <fullName evidence="1">UDP-N-acetylmuramate dehydrogenase</fullName>
    </alternativeName>
</protein>
<feature type="chain" id="PRO_0000179179" description="UDP-N-acetylenolpyruvoylglucosamine reductase">
    <location>
        <begin position="1"/>
        <end position="336"/>
    </location>
</feature>
<feature type="domain" description="FAD-binding PCMH-type" evidence="1">
    <location>
        <begin position="17"/>
        <end position="188"/>
    </location>
</feature>
<feature type="active site" evidence="1">
    <location>
        <position position="164"/>
    </location>
</feature>
<feature type="active site" description="Proton donor" evidence="1">
    <location>
        <position position="237"/>
    </location>
</feature>
<feature type="active site" evidence="1">
    <location>
        <position position="332"/>
    </location>
</feature>
<sequence length="336" mass="38105">MQIQNSHDLSSSNTLQLRSLAERFVELYTPADLSTLLMNPELKNLPWKILGGGSNLVLPSQIEGLVLKVSNLGRKLIHEDPDYWFVKAQAGEVWNDFVQWTLEEGYWGLENLSLIPGTVGAAPIQNIGAYGVEVKDTLWEVHALDLQTGEPRVFSNKECQFSYRDSYFKQEGAGRYLIWDVTFRLPKKNVLHLEYGDIRKEVERNNWPQDPRHVAQAVINIRQSKLPDPKVIGNAGSFFKNPIVSKELRDGLLSKHNDLVSFPYEDRYKLAAGWLIDRAGWKGKKLGPVGMYEKQALVLVNHGGATADDVWKLARQVSSDVHTQFGVEIEAEPIRW</sequence>
<accession>P61433</accession>
<reference key="1">
    <citation type="journal article" date="2004" name="Science">
        <title>A predator unmasked: life cycle of Bdellovibrio bacteriovorus from a genomic perspective.</title>
        <authorList>
            <person name="Rendulic S."/>
            <person name="Jagtap P."/>
            <person name="Rosinus A."/>
            <person name="Eppinger M."/>
            <person name="Baar C."/>
            <person name="Lanz C."/>
            <person name="Keller H."/>
            <person name="Lambert C."/>
            <person name="Evans K.J."/>
            <person name="Goesmann A."/>
            <person name="Meyer F."/>
            <person name="Sockett R.E."/>
            <person name="Schuster S.C."/>
        </authorList>
    </citation>
    <scope>NUCLEOTIDE SEQUENCE [LARGE SCALE GENOMIC DNA]</scope>
    <source>
        <strain>ATCC 15356 / DSM 50701 / NCIMB 9529 / HD100</strain>
    </source>
</reference>
<evidence type="ECO:0000255" key="1">
    <source>
        <dbReference type="HAMAP-Rule" id="MF_00037"/>
    </source>
</evidence>
<keyword id="KW-0131">Cell cycle</keyword>
<keyword id="KW-0132">Cell division</keyword>
<keyword id="KW-0133">Cell shape</keyword>
<keyword id="KW-0961">Cell wall biogenesis/degradation</keyword>
<keyword id="KW-0963">Cytoplasm</keyword>
<keyword id="KW-0274">FAD</keyword>
<keyword id="KW-0285">Flavoprotein</keyword>
<keyword id="KW-0521">NADP</keyword>
<keyword id="KW-0560">Oxidoreductase</keyword>
<keyword id="KW-0573">Peptidoglycan synthesis</keyword>
<keyword id="KW-1185">Reference proteome</keyword>
<proteinExistence type="inferred from homology"/>
<comment type="function">
    <text evidence="1">Cell wall formation.</text>
</comment>
<comment type="catalytic activity">
    <reaction evidence="1">
        <text>UDP-N-acetyl-alpha-D-muramate + NADP(+) = UDP-N-acetyl-3-O-(1-carboxyvinyl)-alpha-D-glucosamine + NADPH + H(+)</text>
        <dbReference type="Rhea" id="RHEA:12248"/>
        <dbReference type="ChEBI" id="CHEBI:15378"/>
        <dbReference type="ChEBI" id="CHEBI:57783"/>
        <dbReference type="ChEBI" id="CHEBI:58349"/>
        <dbReference type="ChEBI" id="CHEBI:68483"/>
        <dbReference type="ChEBI" id="CHEBI:70757"/>
        <dbReference type="EC" id="1.3.1.98"/>
    </reaction>
</comment>
<comment type="cofactor">
    <cofactor evidence="1">
        <name>FAD</name>
        <dbReference type="ChEBI" id="CHEBI:57692"/>
    </cofactor>
</comment>
<comment type="pathway">
    <text evidence="1">Cell wall biogenesis; peptidoglycan biosynthesis.</text>
</comment>
<comment type="subcellular location">
    <subcellularLocation>
        <location evidence="1">Cytoplasm</location>
    </subcellularLocation>
</comment>
<comment type="similarity">
    <text evidence="1">Belongs to the MurB family.</text>
</comment>
<organism>
    <name type="scientific">Bdellovibrio bacteriovorus (strain ATCC 15356 / DSM 50701 / NCIMB 9529 / HD100)</name>
    <dbReference type="NCBI Taxonomy" id="264462"/>
    <lineage>
        <taxon>Bacteria</taxon>
        <taxon>Pseudomonadati</taxon>
        <taxon>Bdellovibrionota</taxon>
        <taxon>Bdellovibrionia</taxon>
        <taxon>Bdellovibrionales</taxon>
        <taxon>Pseudobdellovibrionaceae</taxon>
        <taxon>Bdellovibrio</taxon>
    </lineage>
</organism>
<dbReference type="EC" id="1.3.1.98" evidence="1"/>
<dbReference type="EMBL" id="BX842655">
    <property type="protein sequence ID" value="CAE78050.1"/>
    <property type="molecule type" value="Genomic_DNA"/>
</dbReference>
<dbReference type="RefSeq" id="WP_011165588.1">
    <property type="nucleotide sequence ID" value="NC_005363.1"/>
</dbReference>
<dbReference type="SMR" id="P61433"/>
<dbReference type="STRING" id="264462.Bd3233"/>
<dbReference type="GeneID" id="93014070"/>
<dbReference type="KEGG" id="bba:Bd3233"/>
<dbReference type="eggNOG" id="COG0812">
    <property type="taxonomic scope" value="Bacteria"/>
</dbReference>
<dbReference type="HOGENOM" id="CLU_035304_0_0_7"/>
<dbReference type="UniPathway" id="UPA00219"/>
<dbReference type="Proteomes" id="UP000008080">
    <property type="component" value="Chromosome"/>
</dbReference>
<dbReference type="GO" id="GO:0005829">
    <property type="term" value="C:cytosol"/>
    <property type="evidence" value="ECO:0007669"/>
    <property type="project" value="TreeGrafter"/>
</dbReference>
<dbReference type="GO" id="GO:0071949">
    <property type="term" value="F:FAD binding"/>
    <property type="evidence" value="ECO:0007669"/>
    <property type="project" value="InterPro"/>
</dbReference>
<dbReference type="GO" id="GO:0008762">
    <property type="term" value="F:UDP-N-acetylmuramate dehydrogenase activity"/>
    <property type="evidence" value="ECO:0007669"/>
    <property type="project" value="UniProtKB-UniRule"/>
</dbReference>
<dbReference type="GO" id="GO:0051301">
    <property type="term" value="P:cell division"/>
    <property type="evidence" value="ECO:0007669"/>
    <property type="project" value="UniProtKB-KW"/>
</dbReference>
<dbReference type="GO" id="GO:0071555">
    <property type="term" value="P:cell wall organization"/>
    <property type="evidence" value="ECO:0007669"/>
    <property type="project" value="UniProtKB-KW"/>
</dbReference>
<dbReference type="GO" id="GO:0009252">
    <property type="term" value="P:peptidoglycan biosynthetic process"/>
    <property type="evidence" value="ECO:0007669"/>
    <property type="project" value="UniProtKB-UniRule"/>
</dbReference>
<dbReference type="GO" id="GO:0008360">
    <property type="term" value="P:regulation of cell shape"/>
    <property type="evidence" value="ECO:0007669"/>
    <property type="project" value="UniProtKB-KW"/>
</dbReference>
<dbReference type="Gene3D" id="3.30.465.10">
    <property type="match status" value="1"/>
</dbReference>
<dbReference type="Gene3D" id="3.90.78.10">
    <property type="entry name" value="UDP-N-acetylenolpyruvoylglucosamine reductase, C-terminal domain"/>
    <property type="match status" value="1"/>
</dbReference>
<dbReference type="Gene3D" id="3.30.43.10">
    <property type="entry name" value="Uridine Diphospho-n-acetylenolpyruvylglucosamine Reductase, domain 2"/>
    <property type="match status" value="1"/>
</dbReference>
<dbReference type="HAMAP" id="MF_00037">
    <property type="entry name" value="MurB"/>
    <property type="match status" value="1"/>
</dbReference>
<dbReference type="InterPro" id="IPR016166">
    <property type="entry name" value="FAD-bd_PCMH"/>
</dbReference>
<dbReference type="InterPro" id="IPR036318">
    <property type="entry name" value="FAD-bd_PCMH-like_sf"/>
</dbReference>
<dbReference type="InterPro" id="IPR016167">
    <property type="entry name" value="FAD-bd_PCMH_sub1"/>
</dbReference>
<dbReference type="InterPro" id="IPR016169">
    <property type="entry name" value="FAD-bd_PCMH_sub2"/>
</dbReference>
<dbReference type="InterPro" id="IPR003170">
    <property type="entry name" value="MurB"/>
</dbReference>
<dbReference type="InterPro" id="IPR011601">
    <property type="entry name" value="MurB_C"/>
</dbReference>
<dbReference type="InterPro" id="IPR036635">
    <property type="entry name" value="MurB_C_sf"/>
</dbReference>
<dbReference type="InterPro" id="IPR006094">
    <property type="entry name" value="Oxid_FAD_bind_N"/>
</dbReference>
<dbReference type="NCBIfam" id="TIGR00179">
    <property type="entry name" value="murB"/>
    <property type="match status" value="1"/>
</dbReference>
<dbReference type="NCBIfam" id="NF000755">
    <property type="entry name" value="PRK00046.1"/>
    <property type="match status" value="1"/>
</dbReference>
<dbReference type="NCBIfam" id="NF010478">
    <property type="entry name" value="PRK13903.1"/>
    <property type="match status" value="1"/>
</dbReference>
<dbReference type="PANTHER" id="PTHR21071">
    <property type="entry name" value="UDP-N-ACETYLENOLPYRUVOYLGLUCOSAMINE REDUCTASE"/>
    <property type="match status" value="1"/>
</dbReference>
<dbReference type="PANTHER" id="PTHR21071:SF4">
    <property type="entry name" value="UDP-N-ACETYLENOLPYRUVOYLGLUCOSAMINE REDUCTASE"/>
    <property type="match status" value="1"/>
</dbReference>
<dbReference type="Pfam" id="PF01565">
    <property type="entry name" value="FAD_binding_4"/>
    <property type="match status" value="1"/>
</dbReference>
<dbReference type="Pfam" id="PF02873">
    <property type="entry name" value="MurB_C"/>
    <property type="match status" value="1"/>
</dbReference>
<dbReference type="SUPFAM" id="SSF56176">
    <property type="entry name" value="FAD-binding/transporter-associated domain-like"/>
    <property type="match status" value="1"/>
</dbReference>
<dbReference type="SUPFAM" id="SSF56194">
    <property type="entry name" value="Uridine diphospho-N-Acetylenolpyruvylglucosamine reductase, MurB, C-terminal domain"/>
    <property type="match status" value="1"/>
</dbReference>
<dbReference type="PROSITE" id="PS51387">
    <property type="entry name" value="FAD_PCMH"/>
    <property type="match status" value="1"/>
</dbReference>